<protein>
    <recommendedName>
        <fullName evidence="1">Elongation factor G</fullName>
        <shortName evidence="1">EF-G</shortName>
    </recommendedName>
</protein>
<evidence type="ECO:0000255" key="1">
    <source>
        <dbReference type="HAMAP-Rule" id="MF_00054"/>
    </source>
</evidence>
<reference key="1">
    <citation type="journal article" date="2007" name="Microbiology">
        <title>Comparative analysis of the Corynebacterium glutamicum group and complete genome sequence of strain R.</title>
        <authorList>
            <person name="Yukawa H."/>
            <person name="Omumasaba C.A."/>
            <person name="Nonaka H."/>
            <person name="Kos P."/>
            <person name="Okai N."/>
            <person name="Suzuki N."/>
            <person name="Suda M."/>
            <person name="Tsuge Y."/>
            <person name="Watanabe J."/>
            <person name="Ikeda Y."/>
            <person name="Vertes A.A."/>
            <person name="Inui M."/>
        </authorList>
    </citation>
    <scope>NUCLEOTIDE SEQUENCE [LARGE SCALE GENOMIC DNA]</scope>
    <source>
        <strain>R</strain>
    </source>
</reference>
<proteinExistence type="inferred from homology"/>
<sequence>MAQEVLKDLNKVRNIGIMAHIDAGKTTTTERILFYTGINRKVGETHDGGATTDWMEQEKERGITITSAAVTCFWDNNQVNIIDTPGHVDFTVEVERSLRVLDGAVAVFDGKEGVEPQSEQVWRQATKYDVPRICFVNKMDKLGADFYFTVGTIEDRLGAKPLVMQLPIGAEDNFDGVIDLLEMKALTWRGVTPIGTEATVEEIPAELADRAAEYREKLLETVAESDEELMEKYFGGEELSIAEIKAAIRKMVVNSEIYPVYCGTAYKNKGVQPLLDAVVDFLPSPLDLGETKGTDVKDPEKVLTRKPSDEEPLSALAFKIAAHPFFGKLTFVRLYSGKVEPGEQVLNSTKNKKERIGKLFQMHANKENPVEVAHAGNIYAFIGLKDTTTGDTLCDANAPIILESMDFPDPVIKVAIEPKTKSDQEKLGVAIQKLAEEDPTFTVELDDESGQTVIGGMGELHLDVLVDRMKREFKVEANIGDPQVAYRETIRKPVESLSYTHKKQTGGSGQFAKVIITIEPYAPAPEELEEGESAIYKFENAVTGGRVPREYIPSVDAGIQDAMQYGFLAGYPLVNVKATLEDGAYHDVDSSEMAFKLAGSQAFKEAVAKAKPVLLEPIMSVEITTPEEYMGEVIGDVNARRGQIASMDDRAGAKIVKAKVPLSQMFGYVGDLRSKTQGRANYSMIFDSYAEVPANVAADVIAERNGTAS</sequence>
<name>EFG_CORGB</name>
<keyword id="KW-0963">Cytoplasm</keyword>
<keyword id="KW-0251">Elongation factor</keyword>
<keyword id="KW-0342">GTP-binding</keyword>
<keyword id="KW-0547">Nucleotide-binding</keyword>
<keyword id="KW-0648">Protein biosynthesis</keyword>
<organism>
    <name type="scientific">Corynebacterium glutamicum (strain R)</name>
    <dbReference type="NCBI Taxonomy" id="340322"/>
    <lineage>
        <taxon>Bacteria</taxon>
        <taxon>Bacillati</taxon>
        <taxon>Actinomycetota</taxon>
        <taxon>Actinomycetes</taxon>
        <taxon>Mycobacteriales</taxon>
        <taxon>Corynebacteriaceae</taxon>
        <taxon>Corynebacterium</taxon>
    </lineage>
</organism>
<comment type="function">
    <text evidence="1">Catalyzes the GTP-dependent ribosomal translocation step during translation elongation. During this step, the ribosome changes from the pre-translocational (PRE) to the post-translocational (POST) state as the newly formed A-site-bound peptidyl-tRNA and P-site-bound deacylated tRNA move to the P and E sites, respectively. Catalyzes the coordinated movement of the two tRNA molecules, the mRNA and conformational changes in the ribosome.</text>
</comment>
<comment type="subcellular location">
    <subcellularLocation>
        <location evidence="1">Cytoplasm</location>
    </subcellularLocation>
</comment>
<comment type="similarity">
    <text evidence="1">Belongs to the TRAFAC class translation factor GTPase superfamily. Classic translation factor GTPase family. EF-G/EF-2 subfamily.</text>
</comment>
<dbReference type="EMBL" id="AP009044">
    <property type="protein sequence ID" value="BAF53566.1"/>
    <property type="molecule type" value="Genomic_DNA"/>
</dbReference>
<dbReference type="RefSeq" id="WP_011896755.1">
    <property type="nucleotide sequence ID" value="NC_009342.1"/>
</dbReference>
<dbReference type="SMR" id="A4QBG9"/>
<dbReference type="KEGG" id="cgt:cgR_0597"/>
<dbReference type="HOGENOM" id="CLU_002794_4_1_11"/>
<dbReference type="PhylomeDB" id="A4QBG9"/>
<dbReference type="Proteomes" id="UP000006698">
    <property type="component" value="Chromosome"/>
</dbReference>
<dbReference type="GO" id="GO:0005737">
    <property type="term" value="C:cytoplasm"/>
    <property type="evidence" value="ECO:0007669"/>
    <property type="project" value="UniProtKB-SubCell"/>
</dbReference>
<dbReference type="GO" id="GO:0005525">
    <property type="term" value="F:GTP binding"/>
    <property type="evidence" value="ECO:0007669"/>
    <property type="project" value="UniProtKB-UniRule"/>
</dbReference>
<dbReference type="GO" id="GO:0003924">
    <property type="term" value="F:GTPase activity"/>
    <property type="evidence" value="ECO:0007669"/>
    <property type="project" value="InterPro"/>
</dbReference>
<dbReference type="GO" id="GO:0003746">
    <property type="term" value="F:translation elongation factor activity"/>
    <property type="evidence" value="ECO:0007669"/>
    <property type="project" value="UniProtKB-UniRule"/>
</dbReference>
<dbReference type="GO" id="GO:0032790">
    <property type="term" value="P:ribosome disassembly"/>
    <property type="evidence" value="ECO:0007669"/>
    <property type="project" value="TreeGrafter"/>
</dbReference>
<dbReference type="CDD" id="cd01886">
    <property type="entry name" value="EF-G"/>
    <property type="match status" value="1"/>
</dbReference>
<dbReference type="CDD" id="cd16262">
    <property type="entry name" value="EFG_III"/>
    <property type="match status" value="1"/>
</dbReference>
<dbReference type="CDD" id="cd01434">
    <property type="entry name" value="EFG_mtEFG1_IV"/>
    <property type="match status" value="1"/>
</dbReference>
<dbReference type="CDD" id="cd03713">
    <property type="entry name" value="EFG_mtEFG_C"/>
    <property type="match status" value="1"/>
</dbReference>
<dbReference type="CDD" id="cd04088">
    <property type="entry name" value="EFG_mtEFG_II"/>
    <property type="match status" value="1"/>
</dbReference>
<dbReference type="FunFam" id="2.40.30.10:FF:000006">
    <property type="entry name" value="Elongation factor G"/>
    <property type="match status" value="1"/>
</dbReference>
<dbReference type="FunFam" id="3.30.230.10:FF:000003">
    <property type="entry name" value="Elongation factor G"/>
    <property type="match status" value="1"/>
</dbReference>
<dbReference type="FunFam" id="3.30.70.240:FF:000001">
    <property type="entry name" value="Elongation factor G"/>
    <property type="match status" value="1"/>
</dbReference>
<dbReference type="FunFam" id="3.30.70.870:FF:000001">
    <property type="entry name" value="Elongation factor G"/>
    <property type="match status" value="1"/>
</dbReference>
<dbReference type="FunFam" id="3.40.50.300:FF:000029">
    <property type="entry name" value="Elongation factor G"/>
    <property type="match status" value="1"/>
</dbReference>
<dbReference type="Gene3D" id="3.30.230.10">
    <property type="match status" value="1"/>
</dbReference>
<dbReference type="Gene3D" id="3.30.70.240">
    <property type="match status" value="1"/>
</dbReference>
<dbReference type="Gene3D" id="3.30.70.870">
    <property type="entry name" value="Elongation Factor G (Translational Gtpase), domain 3"/>
    <property type="match status" value="1"/>
</dbReference>
<dbReference type="Gene3D" id="3.40.50.300">
    <property type="entry name" value="P-loop containing nucleotide triphosphate hydrolases"/>
    <property type="match status" value="1"/>
</dbReference>
<dbReference type="Gene3D" id="2.40.30.10">
    <property type="entry name" value="Translation factors"/>
    <property type="match status" value="1"/>
</dbReference>
<dbReference type="HAMAP" id="MF_00054_B">
    <property type="entry name" value="EF_G_EF_2_B"/>
    <property type="match status" value="1"/>
</dbReference>
<dbReference type="InterPro" id="IPR041095">
    <property type="entry name" value="EFG_II"/>
</dbReference>
<dbReference type="InterPro" id="IPR009022">
    <property type="entry name" value="EFG_III"/>
</dbReference>
<dbReference type="InterPro" id="IPR035647">
    <property type="entry name" value="EFG_III/V"/>
</dbReference>
<dbReference type="InterPro" id="IPR047872">
    <property type="entry name" value="EFG_IV"/>
</dbReference>
<dbReference type="InterPro" id="IPR035649">
    <property type="entry name" value="EFG_V"/>
</dbReference>
<dbReference type="InterPro" id="IPR000640">
    <property type="entry name" value="EFG_V-like"/>
</dbReference>
<dbReference type="InterPro" id="IPR004161">
    <property type="entry name" value="EFTu-like_2"/>
</dbReference>
<dbReference type="InterPro" id="IPR031157">
    <property type="entry name" value="G_TR_CS"/>
</dbReference>
<dbReference type="InterPro" id="IPR027417">
    <property type="entry name" value="P-loop_NTPase"/>
</dbReference>
<dbReference type="InterPro" id="IPR020568">
    <property type="entry name" value="Ribosomal_Su5_D2-typ_SF"/>
</dbReference>
<dbReference type="InterPro" id="IPR014721">
    <property type="entry name" value="Ribsml_uS5_D2-typ_fold_subgr"/>
</dbReference>
<dbReference type="InterPro" id="IPR005225">
    <property type="entry name" value="Small_GTP-bd"/>
</dbReference>
<dbReference type="InterPro" id="IPR000795">
    <property type="entry name" value="T_Tr_GTP-bd_dom"/>
</dbReference>
<dbReference type="InterPro" id="IPR009000">
    <property type="entry name" value="Transl_B-barrel_sf"/>
</dbReference>
<dbReference type="InterPro" id="IPR004540">
    <property type="entry name" value="Transl_elong_EFG/EF2"/>
</dbReference>
<dbReference type="InterPro" id="IPR005517">
    <property type="entry name" value="Transl_elong_EFG/EF2_IV"/>
</dbReference>
<dbReference type="NCBIfam" id="TIGR00484">
    <property type="entry name" value="EF-G"/>
    <property type="match status" value="1"/>
</dbReference>
<dbReference type="NCBIfam" id="NF009381">
    <property type="entry name" value="PRK12740.1-5"/>
    <property type="match status" value="1"/>
</dbReference>
<dbReference type="NCBIfam" id="TIGR00231">
    <property type="entry name" value="small_GTP"/>
    <property type="match status" value="1"/>
</dbReference>
<dbReference type="PANTHER" id="PTHR43261:SF1">
    <property type="entry name" value="RIBOSOME-RELEASING FACTOR 2, MITOCHONDRIAL"/>
    <property type="match status" value="1"/>
</dbReference>
<dbReference type="PANTHER" id="PTHR43261">
    <property type="entry name" value="TRANSLATION ELONGATION FACTOR G-RELATED"/>
    <property type="match status" value="1"/>
</dbReference>
<dbReference type="Pfam" id="PF00679">
    <property type="entry name" value="EFG_C"/>
    <property type="match status" value="1"/>
</dbReference>
<dbReference type="Pfam" id="PF14492">
    <property type="entry name" value="EFG_III"/>
    <property type="match status" value="1"/>
</dbReference>
<dbReference type="Pfam" id="PF03764">
    <property type="entry name" value="EFG_IV"/>
    <property type="match status" value="1"/>
</dbReference>
<dbReference type="Pfam" id="PF00009">
    <property type="entry name" value="GTP_EFTU"/>
    <property type="match status" value="1"/>
</dbReference>
<dbReference type="Pfam" id="PF03144">
    <property type="entry name" value="GTP_EFTU_D2"/>
    <property type="match status" value="1"/>
</dbReference>
<dbReference type="PRINTS" id="PR00315">
    <property type="entry name" value="ELONGATNFCT"/>
</dbReference>
<dbReference type="SMART" id="SM00838">
    <property type="entry name" value="EFG_C"/>
    <property type="match status" value="1"/>
</dbReference>
<dbReference type="SMART" id="SM00889">
    <property type="entry name" value="EFG_IV"/>
    <property type="match status" value="1"/>
</dbReference>
<dbReference type="SUPFAM" id="SSF54980">
    <property type="entry name" value="EF-G C-terminal domain-like"/>
    <property type="match status" value="2"/>
</dbReference>
<dbReference type="SUPFAM" id="SSF52540">
    <property type="entry name" value="P-loop containing nucleoside triphosphate hydrolases"/>
    <property type="match status" value="1"/>
</dbReference>
<dbReference type="SUPFAM" id="SSF54211">
    <property type="entry name" value="Ribosomal protein S5 domain 2-like"/>
    <property type="match status" value="1"/>
</dbReference>
<dbReference type="SUPFAM" id="SSF50447">
    <property type="entry name" value="Translation proteins"/>
    <property type="match status" value="1"/>
</dbReference>
<dbReference type="PROSITE" id="PS00301">
    <property type="entry name" value="G_TR_1"/>
    <property type="match status" value="1"/>
</dbReference>
<dbReference type="PROSITE" id="PS51722">
    <property type="entry name" value="G_TR_2"/>
    <property type="match status" value="1"/>
</dbReference>
<accession>A4QBG9</accession>
<feature type="chain" id="PRO_1000008818" description="Elongation factor G">
    <location>
        <begin position="1"/>
        <end position="709"/>
    </location>
</feature>
<feature type="domain" description="tr-type G">
    <location>
        <begin position="10"/>
        <end position="286"/>
    </location>
</feature>
<feature type="binding site" evidence="1">
    <location>
        <begin position="19"/>
        <end position="26"/>
    </location>
    <ligand>
        <name>GTP</name>
        <dbReference type="ChEBI" id="CHEBI:37565"/>
    </ligand>
</feature>
<feature type="binding site" evidence="1">
    <location>
        <begin position="83"/>
        <end position="87"/>
    </location>
    <ligand>
        <name>GTP</name>
        <dbReference type="ChEBI" id="CHEBI:37565"/>
    </ligand>
</feature>
<feature type="binding site" evidence="1">
    <location>
        <begin position="137"/>
        <end position="140"/>
    </location>
    <ligand>
        <name>GTP</name>
        <dbReference type="ChEBI" id="CHEBI:37565"/>
    </ligand>
</feature>
<gene>
    <name evidence="1" type="primary">fusA</name>
    <name type="ordered locus">cgR_0597</name>
</gene>